<dbReference type="EC" id="2.7.6.1" evidence="1"/>
<dbReference type="EMBL" id="BA000045">
    <property type="protein sequence ID" value="BAC88842.1"/>
    <property type="molecule type" value="Genomic_DNA"/>
</dbReference>
<dbReference type="RefSeq" id="NP_923847.1">
    <property type="nucleotide sequence ID" value="NC_005125.1"/>
</dbReference>
<dbReference type="SMR" id="Q7NM67"/>
<dbReference type="FunCoup" id="Q7NM67">
    <property type="interactions" value="389"/>
</dbReference>
<dbReference type="STRING" id="251221.gene:10758379"/>
<dbReference type="EnsemblBacteria" id="BAC88842">
    <property type="protein sequence ID" value="BAC88842"/>
    <property type="gene ID" value="BAC88842"/>
</dbReference>
<dbReference type="KEGG" id="gvi:gll0901"/>
<dbReference type="PATRIC" id="fig|251221.4.peg.919"/>
<dbReference type="eggNOG" id="COG0462">
    <property type="taxonomic scope" value="Bacteria"/>
</dbReference>
<dbReference type="HOGENOM" id="CLU_033546_7_0_3"/>
<dbReference type="InParanoid" id="Q7NM67"/>
<dbReference type="OrthoDB" id="9777067at2"/>
<dbReference type="PhylomeDB" id="Q7NM67"/>
<dbReference type="UniPathway" id="UPA00087">
    <property type="reaction ID" value="UER00172"/>
</dbReference>
<dbReference type="Proteomes" id="UP000000557">
    <property type="component" value="Chromosome"/>
</dbReference>
<dbReference type="GO" id="GO:0005737">
    <property type="term" value="C:cytoplasm"/>
    <property type="evidence" value="ECO:0000318"/>
    <property type="project" value="GO_Central"/>
</dbReference>
<dbReference type="GO" id="GO:0002189">
    <property type="term" value="C:ribose phosphate diphosphokinase complex"/>
    <property type="evidence" value="ECO:0000318"/>
    <property type="project" value="GO_Central"/>
</dbReference>
<dbReference type="GO" id="GO:0005524">
    <property type="term" value="F:ATP binding"/>
    <property type="evidence" value="ECO:0007669"/>
    <property type="project" value="UniProtKB-KW"/>
</dbReference>
<dbReference type="GO" id="GO:0016301">
    <property type="term" value="F:kinase activity"/>
    <property type="evidence" value="ECO:0007669"/>
    <property type="project" value="UniProtKB-KW"/>
</dbReference>
<dbReference type="GO" id="GO:0000287">
    <property type="term" value="F:magnesium ion binding"/>
    <property type="evidence" value="ECO:0007669"/>
    <property type="project" value="UniProtKB-UniRule"/>
</dbReference>
<dbReference type="GO" id="GO:0004749">
    <property type="term" value="F:ribose phosphate diphosphokinase activity"/>
    <property type="evidence" value="ECO:0000318"/>
    <property type="project" value="GO_Central"/>
</dbReference>
<dbReference type="GO" id="GO:0006015">
    <property type="term" value="P:5-phosphoribose 1-diphosphate biosynthetic process"/>
    <property type="evidence" value="ECO:0000318"/>
    <property type="project" value="GO_Central"/>
</dbReference>
<dbReference type="GO" id="GO:0006164">
    <property type="term" value="P:purine nucleotide biosynthetic process"/>
    <property type="evidence" value="ECO:0000318"/>
    <property type="project" value="GO_Central"/>
</dbReference>
<dbReference type="GO" id="GO:0009156">
    <property type="term" value="P:ribonucleoside monophosphate biosynthetic process"/>
    <property type="evidence" value="ECO:0007669"/>
    <property type="project" value="InterPro"/>
</dbReference>
<dbReference type="CDD" id="cd06223">
    <property type="entry name" value="PRTases_typeI"/>
    <property type="match status" value="1"/>
</dbReference>
<dbReference type="FunFam" id="3.40.50.2020:FF:000007">
    <property type="entry name" value="Ribose-phosphate pyrophosphokinase"/>
    <property type="match status" value="1"/>
</dbReference>
<dbReference type="Gene3D" id="3.40.50.2020">
    <property type="match status" value="2"/>
</dbReference>
<dbReference type="HAMAP" id="MF_00583_B">
    <property type="entry name" value="RibP_PPkinase_B"/>
    <property type="match status" value="1"/>
</dbReference>
<dbReference type="InterPro" id="IPR000842">
    <property type="entry name" value="PRib_PP_synth_CS"/>
</dbReference>
<dbReference type="InterPro" id="IPR029099">
    <property type="entry name" value="Pribosyltran_N"/>
</dbReference>
<dbReference type="InterPro" id="IPR000836">
    <property type="entry name" value="PRibTrfase_dom"/>
</dbReference>
<dbReference type="InterPro" id="IPR029057">
    <property type="entry name" value="PRTase-like"/>
</dbReference>
<dbReference type="InterPro" id="IPR005946">
    <property type="entry name" value="Rib-P_diPkinase"/>
</dbReference>
<dbReference type="InterPro" id="IPR037515">
    <property type="entry name" value="Rib-P_diPkinase_bac"/>
</dbReference>
<dbReference type="NCBIfam" id="NF002320">
    <property type="entry name" value="PRK01259.1"/>
    <property type="match status" value="1"/>
</dbReference>
<dbReference type="NCBIfam" id="NF002758">
    <property type="entry name" value="PRK02812.1"/>
    <property type="match status" value="1"/>
</dbReference>
<dbReference type="NCBIfam" id="TIGR01251">
    <property type="entry name" value="ribP_PPkin"/>
    <property type="match status" value="1"/>
</dbReference>
<dbReference type="PANTHER" id="PTHR10210">
    <property type="entry name" value="RIBOSE-PHOSPHATE DIPHOSPHOKINASE FAMILY MEMBER"/>
    <property type="match status" value="1"/>
</dbReference>
<dbReference type="PANTHER" id="PTHR10210:SF41">
    <property type="entry name" value="RIBOSE-PHOSPHATE PYROPHOSPHOKINASE 1, CHLOROPLASTIC"/>
    <property type="match status" value="1"/>
</dbReference>
<dbReference type="Pfam" id="PF14572">
    <property type="entry name" value="Pribosyl_synth"/>
    <property type="match status" value="1"/>
</dbReference>
<dbReference type="Pfam" id="PF13793">
    <property type="entry name" value="Pribosyltran_N"/>
    <property type="match status" value="1"/>
</dbReference>
<dbReference type="SMART" id="SM01400">
    <property type="entry name" value="Pribosyltran_N"/>
    <property type="match status" value="1"/>
</dbReference>
<dbReference type="SUPFAM" id="SSF53271">
    <property type="entry name" value="PRTase-like"/>
    <property type="match status" value="1"/>
</dbReference>
<dbReference type="PROSITE" id="PS00114">
    <property type="entry name" value="PRPP_SYNTHASE"/>
    <property type="match status" value="1"/>
</dbReference>
<keyword id="KW-0067">ATP-binding</keyword>
<keyword id="KW-0963">Cytoplasm</keyword>
<keyword id="KW-0418">Kinase</keyword>
<keyword id="KW-0460">Magnesium</keyword>
<keyword id="KW-0479">Metal-binding</keyword>
<keyword id="KW-0545">Nucleotide biosynthesis</keyword>
<keyword id="KW-0547">Nucleotide-binding</keyword>
<keyword id="KW-1185">Reference proteome</keyword>
<keyword id="KW-0808">Transferase</keyword>
<reference key="1">
    <citation type="journal article" date="2003" name="DNA Res.">
        <title>Complete genome structure of Gloeobacter violaceus PCC 7421, a cyanobacterium that lacks thylakoids.</title>
        <authorList>
            <person name="Nakamura Y."/>
            <person name="Kaneko T."/>
            <person name="Sato S."/>
            <person name="Mimuro M."/>
            <person name="Miyashita H."/>
            <person name="Tsuchiya T."/>
            <person name="Sasamoto S."/>
            <person name="Watanabe A."/>
            <person name="Kawashima K."/>
            <person name="Kishida Y."/>
            <person name="Kiyokawa C."/>
            <person name="Kohara M."/>
            <person name="Matsumoto M."/>
            <person name="Matsuno A."/>
            <person name="Nakazaki N."/>
            <person name="Shimpo S."/>
            <person name="Takeuchi C."/>
            <person name="Yamada M."/>
            <person name="Tabata S."/>
        </authorList>
    </citation>
    <scope>NUCLEOTIDE SEQUENCE [LARGE SCALE GENOMIC DNA]</scope>
    <source>
        <strain>ATCC 29082 / PCC 7421</strain>
    </source>
</reference>
<protein>
    <recommendedName>
        <fullName evidence="1">Ribose-phosphate pyrophosphokinase</fullName>
        <shortName evidence="1">RPPK</shortName>
        <ecNumber evidence="1">2.7.6.1</ecNumber>
    </recommendedName>
    <alternativeName>
        <fullName evidence="1">5-phospho-D-ribosyl alpha-1-diphosphate synthase</fullName>
    </alternativeName>
    <alternativeName>
        <fullName evidence="1">Phosphoribosyl diphosphate synthase</fullName>
    </alternativeName>
    <alternativeName>
        <fullName evidence="1">Phosphoribosyl pyrophosphate synthase</fullName>
        <shortName evidence="1">P-Rib-PP synthase</shortName>
        <shortName evidence="1">PRPP synthase</shortName>
        <shortName evidence="1">PRPPase</shortName>
    </alternativeName>
</protein>
<accession>Q7NM67</accession>
<feature type="chain" id="PRO_0000141140" description="Ribose-phosphate pyrophosphokinase">
    <location>
        <begin position="1"/>
        <end position="332"/>
    </location>
</feature>
<feature type="active site" evidence="1">
    <location>
        <position position="213"/>
    </location>
</feature>
<feature type="binding site" evidence="1">
    <location>
        <begin position="57"/>
        <end position="59"/>
    </location>
    <ligand>
        <name>ATP</name>
        <dbReference type="ChEBI" id="CHEBI:30616"/>
    </ligand>
</feature>
<feature type="binding site" evidence="1">
    <location>
        <position position="150"/>
    </location>
    <ligand>
        <name>Mg(2+)</name>
        <dbReference type="ChEBI" id="CHEBI:18420"/>
        <label>1</label>
    </ligand>
</feature>
<feature type="binding site" evidence="1">
    <location>
        <position position="189"/>
    </location>
    <ligand>
        <name>Mg(2+)</name>
        <dbReference type="ChEBI" id="CHEBI:18420"/>
        <label>2</label>
    </ligand>
</feature>
<feature type="binding site" evidence="1">
    <location>
        <position position="215"/>
    </location>
    <ligand>
        <name>D-ribose 5-phosphate</name>
        <dbReference type="ChEBI" id="CHEBI:78346"/>
    </ligand>
</feature>
<feature type="binding site" evidence="1">
    <location>
        <position position="239"/>
    </location>
    <ligand>
        <name>D-ribose 5-phosphate</name>
        <dbReference type="ChEBI" id="CHEBI:78346"/>
    </ligand>
</feature>
<feature type="binding site" evidence="1">
    <location>
        <begin position="243"/>
        <end position="247"/>
    </location>
    <ligand>
        <name>D-ribose 5-phosphate</name>
        <dbReference type="ChEBI" id="CHEBI:78346"/>
    </ligand>
</feature>
<organism>
    <name type="scientific">Gloeobacter violaceus (strain ATCC 29082 / PCC 7421)</name>
    <dbReference type="NCBI Taxonomy" id="251221"/>
    <lineage>
        <taxon>Bacteria</taxon>
        <taxon>Bacillati</taxon>
        <taxon>Cyanobacteriota</taxon>
        <taxon>Cyanophyceae</taxon>
        <taxon>Gloeobacterales</taxon>
        <taxon>Gloeobacteraceae</taxon>
        <taxon>Gloeobacter</taxon>
    </lineage>
</organism>
<comment type="function">
    <text evidence="1">Involved in the biosynthesis of the central metabolite phospho-alpha-D-ribosyl-1-pyrophosphate (PRPP) via the transfer of pyrophosphoryl group from ATP to 1-hydroxyl of ribose-5-phosphate (Rib-5-P).</text>
</comment>
<comment type="catalytic activity">
    <reaction evidence="1">
        <text>D-ribose 5-phosphate + ATP = 5-phospho-alpha-D-ribose 1-diphosphate + AMP + H(+)</text>
        <dbReference type="Rhea" id="RHEA:15609"/>
        <dbReference type="ChEBI" id="CHEBI:15378"/>
        <dbReference type="ChEBI" id="CHEBI:30616"/>
        <dbReference type="ChEBI" id="CHEBI:58017"/>
        <dbReference type="ChEBI" id="CHEBI:78346"/>
        <dbReference type="ChEBI" id="CHEBI:456215"/>
        <dbReference type="EC" id="2.7.6.1"/>
    </reaction>
</comment>
<comment type="cofactor">
    <cofactor evidence="1">
        <name>Mg(2+)</name>
        <dbReference type="ChEBI" id="CHEBI:18420"/>
    </cofactor>
    <text evidence="1">Binds 2 Mg(2+) ions per subunit.</text>
</comment>
<comment type="pathway">
    <text evidence="1">Metabolic intermediate biosynthesis; 5-phospho-alpha-D-ribose 1-diphosphate biosynthesis; 5-phospho-alpha-D-ribose 1-diphosphate from D-ribose 5-phosphate (route I): step 1/1.</text>
</comment>
<comment type="subunit">
    <text evidence="1">Homohexamer.</text>
</comment>
<comment type="subcellular location">
    <subcellularLocation>
        <location evidence="1">Cytoplasm</location>
    </subcellularLocation>
</comment>
<comment type="similarity">
    <text evidence="1">Belongs to the ribose-phosphate pyrophosphokinase family. Class I subfamily.</text>
</comment>
<proteinExistence type="inferred from homology"/>
<gene>
    <name evidence="1" type="primary">prs</name>
    <name type="ordered locus">gll0901</name>
</gene>
<name>KPRS_GLOVI</name>
<evidence type="ECO:0000255" key="1">
    <source>
        <dbReference type="HAMAP-Rule" id="MF_00583"/>
    </source>
</evidence>
<sequence length="332" mass="36391">MVFPDLLPRRSTVQPVRLMGDERLRLFSGSANPELAQLVARYLGLAPGPLVRKSFADGELYVQIQESIRGCDVYLVQPTCSPVNDSLMELLILIDACRRASARQITAVLPYYGYARADRKTAGRESITAKLVANLITAAGVDRVLAMDLHSAQIQAYFDIPLDHVYGSPVLLQYIKEKQLGDMVIVSPDVGGVSRARAFAKKLDDAPLAIVDKRRQAPNEVEVMNVIGDVKGKTAILVDDMIDTAGTISEAAKVLLRQGAKEVYACATHAVFSSRAIDRLSDGTFTEVLVTNTIPVPPDRRFPQLRVLSVADLIGEAIWRIHEDSSVSSMFR</sequence>